<evidence type="ECO:0000250" key="1"/>
<evidence type="ECO:0000255" key="2">
    <source>
        <dbReference type="PROSITE-ProRule" id="PRU00224"/>
    </source>
</evidence>
<evidence type="ECO:0000255" key="3">
    <source>
        <dbReference type="PROSITE-ProRule" id="PRU00278"/>
    </source>
</evidence>
<evidence type="ECO:0000305" key="4"/>
<feature type="chain" id="PRO_0000244731" description="Peptidyl-prolyl cis-trans isomerase pin1">
    <location>
        <begin position="1"/>
        <end position="150"/>
    </location>
</feature>
<feature type="domain" description="WW" evidence="2">
    <location>
        <begin position="1"/>
        <end position="35"/>
    </location>
</feature>
<feature type="domain" description="PpiC" evidence="3">
    <location>
        <begin position="39"/>
        <end position="150"/>
    </location>
</feature>
<sequence>MDLPENWIVRHSRTYNKDYYYNTVTNESRWDAPVLKGELERVRASHLLIKSRESRRPSSWREEHITRSKEEALKILTDFQHKIESGQETLSALATNYSDCTSAKRGGDLGYFERGQMQKPFEEATFALQVGELSKPVWTDSGVHLILRTA</sequence>
<name>PIN1_RHIO9</name>
<reference key="1">
    <citation type="journal article" date="2009" name="PLoS Genet.">
        <title>Genomic analysis of the basal lineage fungus Rhizopus oryzae reveals a whole-genome duplication.</title>
        <authorList>
            <person name="Ma L.-J."/>
            <person name="Ibrahim A.S."/>
            <person name="Skory C."/>
            <person name="Grabherr M.G."/>
            <person name="Burger G."/>
            <person name="Butler M."/>
            <person name="Elias M."/>
            <person name="Idnurm A."/>
            <person name="Lang B.F."/>
            <person name="Sone T."/>
            <person name="Abe A."/>
            <person name="Calvo S.E."/>
            <person name="Corrochano L.M."/>
            <person name="Engels R."/>
            <person name="Fu J."/>
            <person name="Hansberg W."/>
            <person name="Kim J.-M."/>
            <person name="Kodira C.D."/>
            <person name="Koehrsen M.J."/>
            <person name="Liu B."/>
            <person name="Miranda-Saavedra D."/>
            <person name="O'Leary S."/>
            <person name="Ortiz-Castellanos L."/>
            <person name="Poulter R."/>
            <person name="Rodriguez-Romero J."/>
            <person name="Ruiz-Herrera J."/>
            <person name="Shen Y.-Q."/>
            <person name="Zeng Q."/>
            <person name="Galagan J."/>
            <person name="Birren B.W."/>
            <person name="Cuomo C.A."/>
            <person name="Wickes B.L."/>
        </authorList>
    </citation>
    <scope>NUCLEOTIDE SEQUENCE [LARGE SCALE GENOMIC DNA]</scope>
    <source>
        <strain>RA 99-880 / ATCC MYA-4621 / FGSC 9543 / NRRL 43880</strain>
    </source>
</reference>
<keyword id="KW-0413">Isomerase</keyword>
<keyword id="KW-0539">Nucleus</keyword>
<keyword id="KW-1185">Reference proteome</keyword>
<keyword id="KW-0697">Rotamase</keyword>
<dbReference type="EC" id="5.2.1.8"/>
<dbReference type="EMBL" id="CH476732">
    <property type="protein sequence ID" value="EIE75959.1"/>
    <property type="molecule type" value="Genomic_DNA"/>
</dbReference>
<dbReference type="SMR" id="P0C1J8"/>
<dbReference type="FunCoup" id="P0C1J8">
    <property type="interactions" value="864"/>
</dbReference>
<dbReference type="STRING" id="246409.P0C1J8"/>
<dbReference type="VEuPathDB" id="FungiDB:RO3G_00663"/>
<dbReference type="eggNOG" id="KOG3259">
    <property type="taxonomic scope" value="Eukaryota"/>
</dbReference>
<dbReference type="InParanoid" id="P0C1J8"/>
<dbReference type="OMA" id="WEMRTSR"/>
<dbReference type="OrthoDB" id="46201at4827"/>
<dbReference type="Proteomes" id="UP000009138">
    <property type="component" value="Unassembled WGS sequence"/>
</dbReference>
<dbReference type="GO" id="GO:0005829">
    <property type="term" value="C:cytosol"/>
    <property type="evidence" value="ECO:0007669"/>
    <property type="project" value="TreeGrafter"/>
</dbReference>
<dbReference type="GO" id="GO:0005634">
    <property type="term" value="C:nucleus"/>
    <property type="evidence" value="ECO:0007669"/>
    <property type="project" value="UniProtKB-SubCell"/>
</dbReference>
<dbReference type="GO" id="GO:0140463">
    <property type="term" value="F:chromatin-protein adaptor activity"/>
    <property type="evidence" value="ECO:0007669"/>
    <property type="project" value="EnsemblFungi"/>
</dbReference>
<dbReference type="GO" id="GO:0003755">
    <property type="term" value="F:peptidyl-prolyl cis-trans isomerase activity"/>
    <property type="evidence" value="ECO:0007669"/>
    <property type="project" value="UniProtKB-KW"/>
</dbReference>
<dbReference type="GO" id="GO:0000993">
    <property type="term" value="F:RNA polymerase II complex binding"/>
    <property type="evidence" value="ECO:0007669"/>
    <property type="project" value="EnsemblFungi"/>
</dbReference>
<dbReference type="GO" id="GO:0180010">
    <property type="term" value="P:co-transcriptional mRNA 3'-end processing, cleavage and polyadenylation pathway"/>
    <property type="evidence" value="ECO:0007669"/>
    <property type="project" value="EnsemblFungi"/>
</dbReference>
<dbReference type="GO" id="GO:0000122">
    <property type="term" value="P:negative regulation of transcription by RNA polymerase II"/>
    <property type="evidence" value="ECO:0007669"/>
    <property type="project" value="EnsemblFungi"/>
</dbReference>
<dbReference type="GO" id="GO:2000059">
    <property type="term" value="P:negative regulation of ubiquitin-dependent protein catabolic process"/>
    <property type="evidence" value="ECO:0007669"/>
    <property type="project" value="EnsemblFungi"/>
</dbReference>
<dbReference type="GO" id="GO:2000749">
    <property type="term" value="P:positive regulation of rDNA heterochromatin formation"/>
    <property type="evidence" value="ECO:0007669"/>
    <property type="project" value="EnsemblFungi"/>
</dbReference>
<dbReference type="GO" id="GO:0045899">
    <property type="term" value="P:positive regulation of RNA polymerase II transcription preinitiation complex assembly"/>
    <property type="evidence" value="ECO:0007669"/>
    <property type="project" value="EnsemblFungi"/>
</dbReference>
<dbReference type="GO" id="GO:0006369">
    <property type="term" value="P:termination of RNA polymerase II transcription"/>
    <property type="evidence" value="ECO:0007669"/>
    <property type="project" value="EnsemblFungi"/>
</dbReference>
<dbReference type="CDD" id="cd00201">
    <property type="entry name" value="WW"/>
    <property type="match status" value="1"/>
</dbReference>
<dbReference type="FunFam" id="3.10.50.40:FF:000010">
    <property type="entry name" value="Peptidyl-prolyl cis-trans isomerase Pin1"/>
    <property type="match status" value="1"/>
</dbReference>
<dbReference type="Gene3D" id="2.20.70.10">
    <property type="match status" value="1"/>
</dbReference>
<dbReference type="Gene3D" id="3.10.50.40">
    <property type="match status" value="1"/>
</dbReference>
<dbReference type="InterPro" id="IPR046357">
    <property type="entry name" value="PPIase_dom_sf"/>
</dbReference>
<dbReference type="InterPro" id="IPR051370">
    <property type="entry name" value="PPIase_Pin1"/>
</dbReference>
<dbReference type="InterPro" id="IPR000297">
    <property type="entry name" value="PPIase_PpiC"/>
</dbReference>
<dbReference type="InterPro" id="IPR001202">
    <property type="entry name" value="WW_dom"/>
</dbReference>
<dbReference type="InterPro" id="IPR036020">
    <property type="entry name" value="WW_dom_sf"/>
</dbReference>
<dbReference type="PANTHER" id="PTHR10657">
    <property type="entry name" value="PEPTIDYL-PROLYL CIS-TRANS ISOMERASE"/>
    <property type="match status" value="1"/>
</dbReference>
<dbReference type="PANTHER" id="PTHR10657:SF4">
    <property type="entry name" value="PEPTIDYL-PROLYL CIS-TRANS ISOMERASE-RELATED"/>
    <property type="match status" value="1"/>
</dbReference>
<dbReference type="Pfam" id="PF00639">
    <property type="entry name" value="Rotamase"/>
    <property type="match status" value="1"/>
</dbReference>
<dbReference type="Pfam" id="PF00397">
    <property type="entry name" value="WW"/>
    <property type="match status" value="1"/>
</dbReference>
<dbReference type="SMART" id="SM00456">
    <property type="entry name" value="WW"/>
    <property type="match status" value="1"/>
</dbReference>
<dbReference type="SUPFAM" id="SSF54534">
    <property type="entry name" value="FKBP-like"/>
    <property type="match status" value="1"/>
</dbReference>
<dbReference type="SUPFAM" id="SSF51045">
    <property type="entry name" value="WW domain"/>
    <property type="match status" value="1"/>
</dbReference>
<dbReference type="PROSITE" id="PS50198">
    <property type="entry name" value="PPIC_PPIASE_2"/>
    <property type="match status" value="1"/>
</dbReference>
<dbReference type="PROSITE" id="PS50020">
    <property type="entry name" value="WW_DOMAIN_2"/>
    <property type="match status" value="1"/>
</dbReference>
<organism>
    <name type="scientific">Rhizopus delemar (strain RA 99-880 / ATCC MYA-4621 / FGSC 9543 / NRRL 43880)</name>
    <name type="common">Mucormycosis agent</name>
    <name type="synonym">Rhizopus arrhizus var. delemar</name>
    <dbReference type="NCBI Taxonomy" id="246409"/>
    <lineage>
        <taxon>Eukaryota</taxon>
        <taxon>Fungi</taxon>
        <taxon>Fungi incertae sedis</taxon>
        <taxon>Mucoromycota</taxon>
        <taxon>Mucoromycotina</taxon>
        <taxon>Mucoromycetes</taxon>
        <taxon>Mucorales</taxon>
        <taxon>Mucorineae</taxon>
        <taxon>Rhizopodaceae</taxon>
        <taxon>Rhizopus</taxon>
    </lineage>
</organism>
<proteinExistence type="inferred from homology"/>
<protein>
    <recommendedName>
        <fullName>Peptidyl-prolyl cis-trans isomerase pin1</fullName>
        <shortName>PPIase pin1</shortName>
        <ecNumber>5.2.1.8</ecNumber>
    </recommendedName>
    <alternativeName>
        <fullName>Parvulin pin1</fullName>
    </alternativeName>
</protein>
<gene>
    <name type="primary">pin1</name>
    <name type="ORF">RO3G_00663</name>
</gene>
<comment type="function">
    <text evidence="1">PPIases accelerate the folding of proteins. It catalyzes the cis-trans isomerization of proline imidic peptide bonds in oligopeptides. Catalyzes pSer/Thr-Pro cis/trans isomerizations (By similarity).</text>
</comment>
<comment type="catalytic activity">
    <reaction>
        <text>[protein]-peptidylproline (omega=180) = [protein]-peptidylproline (omega=0)</text>
        <dbReference type="Rhea" id="RHEA:16237"/>
        <dbReference type="Rhea" id="RHEA-COMP:10747"/>
        <dbReference type="Rhea" id="RHEA-COMP:10748"/>
        <dbReference type="ChEBI" id="CHEBI:83833"/>
        <dbReference type="ChEBI" id="CHEBI:83834"/>
        <dbReference type="EC" id="5.2.1.8"/>
    </reaction>
</comment>
<comment type="subcellular location">
    <subcellularLocation>
        <location evidence="1">Nucleus</location>
    </subcellularLocation>
</comment>
<comment type="similarity">
    <text evidence="4">Belongs to the PpiC/parvulin rotamase family.</text>
</comment>
<accession>P0C1J8</accession>
<accession>I1BIC9</accession>